<organism>
    <name type="scientific">Talaromyces marneffei (strain ATCC 18224 / CBS 334.59 / QM 7333)</name>
    <name type="common">Penicillium marneffei</name>
    <dbReference type="NCBI Taxonomy" id="441960"/>
    <lineage>
        <taxon>Eukaryota</taxon>
        <taxon>Fungi</taxon>
        <taxon>Dikarya</taxon>
        <taxon>Ascomycota</taxon>
        <taxon>Pezizomycotina</taxon>
        <taxon>Eurotiomycetes</taxon>
        <taxon>Eurotiomycetidae</taxon>
        <taxon>Eurotiales</taxon>
        <taxon>Trichocomaceae</taxon>
        <taxon>Talaromyces</taxon>
        <taxon>Talaromyces sect. Talaromyces</taxon>
    </lineage>
</organism>
<feature type="signal peptide" evidence="2">
    <location>
        <begin position="1"/>
        <end position="31"/>
    </location>
</feature>
<feature type="chain" id="PRO_0000407530" description="Vacuolar protein sorting/targeting protein 10">
    <location>
        <begin position="32"/>
        <end position="1504"/>
    </location>
</feature>
<feature type="topological domain" description="Lumenal" evidence="2">
    <location>
        <begin position="32"/>
        <end position="1370"/>
    </location>
</feature>
<feature type="transmembrane region" description="Helical" evidence="2">
    <location>
        <begin position="1371"/>
        <end position="1391"/>
    </location>
</feature>
<feature type="topological domain" description="Cytoplasmic" evidence="2">
    <location>
        <begin position="1392"/>
        <end position="1423"/>
    </location>
</feature>
<feature type="transmembrane region" description="Helical" evidence="2">
    <location>
        <begin position="1424"/>
        <end position="1444"/>
    </location>
</feature>
<feature type="topological domain" description="Lumenal" evidence="2">
    <location>
        <begin position="1445"/>
        <end position="1504"/>
    </location>
</feature>
<feature type="repeat" description="BNR 1">
    <location>
        <begin position="70"/>
        <end position="80"/>
    </location>
</feature>
<feature type="repeat" description="BNR 2">
    <location>
        <begin position="118"/>
        <end position="128"/>
    </location>
</feature>
<feature type="repeat" description="BNR 3">
    <location>
        <begin position="394"/>
        <end position="403"/>
    </location>
</feature>
<feature type="repeat" description="BNR 4">
    <location>
        <begin position="455"/>
        <end position="465"/>
    </location>
</feature>
<feature type="repeat" description="BNR 5">
    <location>
        <begin position="739"/>
        <end position="749"/>
    </location>
</feature>
<feature type="repeat" description="BNR 6">
    <location>
        <begin position="1120"/>
        <end position="1130"/>
    </location>
</feature>
<feature type="repeat" description="BNR 7">
    <location>
        <begin position="1161"/>
        <end position="1171"/>
    </location>
</feature>
<feature type="region of interest" description="Disordered" evidence="3">
    <location>
        <begin position="1485"/>
        <end position="1504"/>
    </location>
</feature>
<feature type="glycosylation site" description="N-linked (GlcNAc...) asparagine" evidence="2">
    <location>
        <position position="313"/>
    </location>
</feature>
<feature type="glycosylation site" description="N-linked (GlcNAc...) asparagine" evidence="2">
    <location>
        <position position="338"/>
    </location>
</feature>
<feature type="glycosylation site" description="N-linked (GlcNAc...) asparagine" evidence="2">
    <location>
        <position position="986"/>
    </location>
</feature>
<feature type="glycosylation site" description="N-linked (GlcNAc...) asparagine" evidence="2">
    <location>
        <position position="998"/>
    </location>
</feature>
<feature type="glycosylation site" description="N-linked (GlcNAc...) asparagine" evidence="2">
    <location>
        <position position="1281"/>
    </location>
</feature>
<comment type="function">
    <text evidence="1">Functions as a sorting receptor in the Golgi compartment required for the intracellular sorting and delivery of soluble vacuolar proteins, like carboxypeptidase Y (CPY) and proteinase A. Executes multiple rounds of sorting by cycling between the late Golgi and a prevacuolar endosome-like compartment (By similarity).</text>
</comment>
<comment type="subcellular location">
    <subcellularLocation>
        <location evidence="1">Golgi apparatus</location>
        <location evidence="1">trans-Golgi network membrane</location>
        <topology evidence="1">Multi-pass membrane protein</topology>
    </subcellularLocation>
    <subcellularLocation>
        <location evidence="1">Prevacuolar compartment membrane</location>
        <topology evidence="1">Multi-pass membrane protein</topology>
    </subcellularLocation>
    <text evidence="1">Cycles between the Golgi apparatus and the prevacuolar compartment.</text>
</comment>
<comment type="similarity">
    <text evidence="4">Belongs to the VPS10-related sortilin family.</text>
</comment>
<dbReference type="EMBL" id="DS995903">
    <property type="protein sequence ID" value="EEA22297.1"/>
    <property type="molecule type" value="Genomic_DNA"/>
</dbReference>
<dbReference type="RefSeq" id="XP_002150906.1">
    <property type="nucleotide sequence ID" value="XM_002150870.1"/>
</dbReference>
<dbReference type="SMR" id="B6QMS8"/>
<dbReference type="STRING" id="441960.B6QMS8"/>
<dbReference type="GlyCosmos" id="B6QMS8">
    <property type="glycosylation" value="5 sites, No reported glycans"/>
</dbReference>
<dbReference type="VEuPathDB" id="FungiDB:PMAA_060750"/>
<dbReference type="HOGENOM" id="CLU_000700_0_0_1"/>
<dbReference type="OrthoDB" id="4277at28568"/>
<dbReference type="PhylomeDB" id="B6QMS8"/>
<dbReference type="Proteomes" id="UP000001294">
    <property type="component" value="Unassembled WGS sequence"/>
</dbReference>
<dbReference type="GO" id="GO:0005829">
    <property type="term" value="C:cytosol"/>
    <property type="evidence" value="ECO:0007669"/>
    <property type="project" value="GOC"/>
</dbReference>
<dbReference type="GO" id="GO:0005794">
    <property type="term" value="C:Golgi apparatus"/>
    <property type="evidence" value="ECO:0007669"/>
    <property type="project" value="UniProtKB-SubCell"/>
</dbReference>
<dbReference type="GO" id="GO:0016020">
    <property type="term" value="C:membrane"/>
    <property type="evidence" value="ECO:0007669"/>
    <property type="project" value="UniProtKB-KW"/>
</dbReference>
<dbReference type="GO" id="GO:0006895">
    <property type="term" value="P:Golgi to endosome transport"/>
    <property type="evidence" value="ECO:0007669"/>
    <property type="project" value="TreeGrafter"/>
</dbReference>
<dbReference type="GO" id="GO:0006896">
    <property type="term" value="P:Golgi to vacuole transport"/>
    <property type="evidence" value="ECO:0007669"/>
    <property type="project" value="TreeGrafter"/>
</dbReference>
<dbReference type="GO" id="GO:0006623">
    <property type="term" value="P:protein targeting to vacuole"/>
    <property type="evidence" value="ECO:0007669"/>
    <property type="project" value="TreeGrafter"/>
</dbReference>
<dbReference type="CDD" id="cd15482">
    <property type="entry name" value="Sialidase_non-viral"/>
    <property type="match status" value="1"/>
</dbReference>
<dbReference type="FunFam" id="3.30.60.270:FF:000005">
    <property type="entry name" value="Sortilin"/>
    <property type="match status" value="2"/>
</dbReference>
<dbReference type="Gene3D" id="2.10.70.80">
    <property type="match status" value="2"/>
</dbReference>
<dbReference type="Gene3D" id="3.30.60.270">
    <property type="match status" value="2"/>
</dbReference>
<dbReference type="Gene3D" id="2.130.10.10">
    <property type="entry name" value="YVTN repeat-like/Quinoprotein amine dehydrogenase"/>
    <property type="match status" value="1"/>
</dbReference>
<dbReference type="InterPro" id="IPR031777">
    <property type="entry name" value="Sortilin_C"/>
</dbReference>
<dbReference type="InterPro" id="IPR031778">
    <property type="entry name" value="Sortilin_N"/>
</dbReference>
<dbReference type="InterPro" id="IPR006581">
    <property type="entry name" value="VPS10"/>
</dbReference>
<dbReference type="InterPro" id="IPR050310">
    <property type="entry name" value="VPS10-sortilin"/>
</dbReference>
<dbReference type="InterPro" id="IPR015943">
    <property type="entry name" value="WD40/YVTN_repeat-like_dom_sf"/>
</dbReference>
<dbReference type="PANTHER" id="PTHR12106">
    <property type="entry name" value="SORTILIN RELATED"/>
    <property type="match status" value="1"/>
</dbReference>
<dbReference type="PANTHER" id="PTHR12106:SF27">
    <property type="entry name" value="SORTILIN-RELATED RECEPTOR"/>
    <property type="match status" value="1"/>
</dbReference>
<dbReference type="Pfam" id="PF15902">
    <property type="entry name" value="Sortilin-Vps10"/>
    <property type="match status" value="2"/>
</dbReference>
<dbReference type="Pfam" id="PF15901">
    <property type="entry name" value="Sortilin_C"/>
    <property type="match status" value="2"/>
</dbReference>
<dbReference type="SMART" id="SM00602">
    <property type="entry name" value="VPS10"/>
    <property type="match status" value="2"/>
</dbReference>
<dbReference type="SUPFAM" id="SSF110296">
    <property type="entry name" value="Oligoxyloglucan reducing end-specific cellobiohydrolase"/>
    <property type="match status" value="2"/>
</dbReference>
<evidence type="ECO:0000250" key="1"/>
<evidence type="ECO:0000255" key="2"/>
<evidence type="ECO:0000256" key="3">
    <source>
        <dbReference type="SAM" id="MobiDB-lite"/>
    </source>
</evidence>
<evidence type="ECO:0000305" key="4"/>
<gene>
    <name type="primary">vps10</name>
    <name type="ORF">PMAA_060750</name>
</gene>
<proteinExistence type="inferred from homology"/>
<reference key="1">
    <citation type="journal article" date="2015" name="Genome Announc.">
        <title>Genome sequence of the AIDS-associated pathogen Penicillium marneffei (ATCC18224) and its near taxonomic relative Talaromyces stipitatus (ATCC10500).</title>
        <authorList>
            <person name="Nierman W.C."/>
            <person name="Fedorova-Abrams N.D."/>
            <person name="Andrianopoulos A."/>
        </authorList>
    </citation>
    <scope>NUCLEOTIDE SEQUENCE [LARGE SCALE GENOMIC DNA]</scope>
    <source>
        <strain>ATCC 18224 / CBS 334.59 / QM 7333</strain>
    </source>
</reference>
<accession>B6QMS8</accession>
<name>VPS10_TALMQ</name>
<keyword id="KW-0325">Glycoprotein</keyword>
<keyword id="KW-0333">Golgi apparatus</keyword>
<keyword id="KW-0472">Membrane</keyword>
<keyword id="KW-0653">Protein transport</keyword>
<keyword id="KW-0675">Receptor</keyword>
<keyword id="KW-1185">Reference proteome</keyword>
<keyword id="KW-0677">Repeat</keyword>
<keyword id="KW-0732">Signal</keyword>
<keyword id="KW-0812">Transmembrane</keyword>
<keyword id="KW-1133">Transmembrane helix</keyword>
<keyword id="KW-0813">Transport</keyword>
<protein>
    <recommendedName>
        <fullName>Vacuolar protein sorting/targeting protein 10</fullName>
    </recommendedName>
    <alternativeName>
        <fullName>Carboxypeptidase Y receptor</fullName>
        <shortName>CPY receptor</shortName>
    </alternativeName>
    <alternativeName>
        <fullName>Sortilin vps10</fullName>
    </alternativeName>
    <alternativeName>
        <fullName>Vacuolar carboxypeptidase sorting receptor vps10</fullName>
    </alternativeName>
</protein>
<sequence>MTRQWLHLTTSPLLLLLLLITISSLTGGAVAKSDGPKIALKEVEVVPEQPFYFENTDTVLFLSAATGEVYRSFDGGLEWHVIGKGEGEEGLTNDAVVILPHKYDNKKAYILGRHGAHWVTTDQGRTWRRFEVPAAPSMLLYERLRFHGEDSRKVIFMGERCSLVACLETAFYTLDDFETVAPLRDTARGCFWAVGTPAFAESTTEYAKEIGDRVLCIVHGLKNPFAAAYRLVYSDSFFKDNEDGIEANLNAGRPVAGIINAAARTKYIMVAAKSQGTDELAMFVTDDAITWHRAEFGNHKIEEGAYTVLGGTNYSIQVDVKNTDRSESMGVLFTSNSNGTYFTRNIEHTNRNMEGYVDFEDIIGVQGIVLVNVVDNWEEVEKKFDADKKVISKISFDDGRTFQPLKANDKDLHVHSVTDFQNIGRVFSSPAPGIVLGVGNTGSHLKSYTKDGNLYVSDDAGVTWRLALEKPHKYEIGNKGAVIVAIKDDGDPTGKIQFSINHGKDWDTAELDHKIIPFYLTTTPDSTSLKFLLVGFSEESRKWSIFAIDFEGLHERECKESDFEEWPARLDEKGEPDCLMGHKQYYRRRKSDADCFITETMFKTPTPEFKACKCTAEDFECDYNFVRSEDRTKCVPATPLKAPEGACKSEDDTFKGPSGWRLIPGNACIRDGGEELDKEIDRPCKDVLKAPPGDAKAISSTVNYIEAEMFKSFYYLERAGSSRGEDETIVMLTSNGKLYVTHNHGKTWTHELTDVKFEEIVRNPYLNDRAFFLTNGKKQFYTINRAETFESFTAPAEKNPDPGMTLGFHEIYKDWMIWTGPSDCSHGNCPKDSYFTKHRGDGWEILLRAVINCEFMAQESRGEESNNLIFCNQHEAEEVDGQRMLVTSNDFFDTSKTPLPRIIAFAKASEFIIIAKPDPEKEHAMKFDVSVDGVTFADAEYSVNLEVSMELGYTLLQSTTHSVFMHVTLNDQRDHQYGLLIKSNSNGTSYVLSLSDVNRSNDGYVDFEKLQGLEGVVIANVVSNTKDVEKGSEKKLRTMITHNDGAQWTLIPPPVKDSEGKGYNCGSDGKPTDKCALHLHGYTERRDSRNTFASASAIGLSFGVGNVGESLVSKADASTFFSRDGGISWKEVKKGSHFWEYGDQGSVLVLVAEGKPTREVFFSTDEGDTWEVYQFSEKEVTVLDFSTVPSDTSKNFLIWAREAGSDKLVTINLDFSGLRDRTCHLDEDTGESEDYYIWEPKHPLQEGNCLFGHVEQYHRKNPKSHCWNDWSEAHVHSISHNCSCTFQDYECDYNYERQTDGSCALVPGLPKPNAIEYCKENPDAVEYWEPTGYRRIPITTCTGGKNLDQWISHPCPGHQEEYERKHGVSGAVIFFAIIIPIAIAVAAGYWVYTHWDGKFGQIRLGEGGGQSFITSRGDSPFITIPVVIIAGTVAAVKVLPLLFMSLWRSASGYVHLPGSRGPRPYATRGAFASRRGDYTNVVDDEDELLGDDEFEDEEGDEERS</sequence>